<accession>C6JWH0</accession>
<name>PRF01_KALTU</name>
<evidence type="ECO:0000250" key="1">
    <source>
        <dbReference type="UniProtKB" id="P35081"/>
    </source>
</evidence>
<evidence type="ECO:0000250" key="2">
    <source>
        <dbReference type="UniProtKB" id="Q8H2C9"/>
    </source>
</evidence>
<evidence type="ECO:0000255" key="3"/>
<evidence type="ECO:0000255" key="4">
    <source>
        <dbReference type="RuleBase" id="RU003908"/>
    </source>
</evidence>
<evidence type="ECO:0000255" key="5">
    <source>
        <dbReference type="RuleBase" id="RU003909"/>
    </source>
</evidence>
<evidence type="ECO:0000269" key="6">
    <source>
    </source>
</evidence>
<evidence type="ECO:0000303" key="7">
    <source>
    </source>
</evidence>
<evidence type="ECO:0000305" key="8"/>
<evidence type="ECO:0000312" key="9">
    <source>
        <dbReference type="EMBL" id="ACS34771.1"/>
    </source>
</evidence>
<organism evidence="9">
    <name type="scientific">Kali turgidum</name>
    <name type="common">Prickly saltwort</name>
    <name type="synonym">Salsola kali</name>
    <dbReference type="NCBI Taxonomy" id="151250"/>
    <lineage>
        <taxon>Eukaryota</taxon>
        <taxon>Viridiplantae</taxon>
        <taxon>Streptophyta</taxon>
        <taxon>Embryophyta</taxon>
        <taxon>Tracheophyta</taxon>
        <taxon>Spermatophyta</taxon>
        <taxon>Magnoliopsida</taxon>
        <taxon>eudicotyledons</taxon>
        <taxon>Gunneridae</taxon>
        <taxon>Pentapetalae</taxon>
        <taxon>Caryophyllales</taxon>
        <taxon>Chenopodiaceae</taxon>
        <taxon>Salsoloideae</taxon>
        <taxon>Salsoleae</taxon>
        <taxon>Kali</taxon>
    </lineage>
</organism>
<dbReference type="EMBL" id="GQ145223">
    <property type="protein sequence ID" value="ACS34771.1"/>
    <property type="molecule type" value="mRNA"/>
</dbReference>
<dbReference type="SMR" id="C6JWH0"/>
<dbReference type="Allergome" id="2099">
    <property type="allergen name" value="Sal k 4"/>
</dbReference>
<dbReference type="Allergome" id="8171">
    <property type="allergen name" value="Sal k 4.0101"/>
</dbReference>
<dbReference type="GO" id="GO:0005938">
    <property type="term" value="C:cell cortex"/>
    <property type="evidence" value="ECO:0007669"/>
    <property type="project" value="TreeGrafter"/>
</dbReference>
<dbReference type="GO" id="GO:0005856">
    <property type="term" value="C:cytoskeleton"/>
    <property type="evidence" value="ECO:0000250"/>
    <property type="project" value="UniProtKB"/>
</dbReference>
<dbReference type="GO" id="GO:0003785">
    <property type="term" value="F:actin monomer binding"/>
    <property type="evidence" value="ECO:0007669"/>
    <property type="project" value="TreeGrafter"/>
</dbReference>
<dbReference type="CDD" id="cd00148">
    <property type="entry name" value="PROF"/>
    <property type="match status" value="1"/>
</dbReference>
<dbReference type="FunFam" id="3.30.450.30:FF:000001">
    <property type="entry name" value="Profilin"/>
    <property type="match status" value="1"/>
</dbReference>
<dbReference type="Gene3D" id="3.30.450.30">
    <property type="entry name" value="Dynein light chain 2a, cytoplasmic"/>
    <property type="match status" value="1"/>
</dbReference>
<dbReference type="InterPro" id="IPR048278">
    <property type="entry name" value="PFN"/>
</dbReference>
<dbReference type="InterPro" id="IPR005455">
    <property type="entry name" value="PFN_euk"/>
</dbReference>
<dbReference type="InterPro" id="IPR036140">
    <property type="entry name" value="PFN_sf"/>
</dbReference>
<dbReference type="InterPro" id="IPR027310">
    <property type="entry name" value="Profilin_CS"/>
</dbReference>
<dbReference type="PANTHER" id="PTHR11604">
    <property type="entry name" value="PROFILIN"/>
    <property type="match status" value="1"/>
</dbReference>
<dbReference type="PANTHER" id="PTHR11604:SF35">
    <property type="entry name" value="PROFILIN-3"/>
    <property type="match status" value="1"/>
</dbReference>
<dbReference type="Pfam" id="PF00235">
    <property type="entry name" value="Profilin"/>
    <property type="match status" value="1"/>
</dbReference>
<dbReference type="PRINTS" id="PR00392">
    <property type="entry name" value="PROFILIN"/>
</dbReference>
<dbReference type="PRINTS" id="PR01640">
    <property type="entry name" value="PROFILINPLNT"/>
</dbReference>
<dbReference type="SMART" id="SM00392">
    <property type="entry name" value="PROF"/>
    <property type="match status" value="1"/>
</dbReference>
<dbReference type="SUPFAM" id="SSF55770">
    <property type="entry name" value="Profilin (actin-binding protein)"/>
    <property type="match status" value="1"/>
</dbReference>
<dbReference type="PROSITE" id="PS00414">
    <property type="entry name" value="PROFILIN"/>
    <property type="match status" value="1"/>
</dbReference>
<sequence>MSWQTYVDDHLMCEIEGTNNHLTAAAILGVDGSVWAQSANFPQFKPDEISAVVKEFDEAGTLAPTGLHLGGTKYMVIQGEAGQVIRGKKGPGGICVKKTGQALIFGIYDEPVTPGQCNMIVERLGDYLVEQGM</sequence>
<proteinExistence type="evidence at protein level"/>
<protein>
    <recommendedName>
        <fullName evidence="8">Profilin Sal k 4.0101</fullName>
    </recommendedName>
    <alternativeName>
        <fullName evidence="7">Allergen Sal k 4</fullName>
    </alternativeName>
    <allergenName evidence="8">Sal k 4.0101</allergenName>
</protein>
<reference evidence="9" key="1">
    <citation type="journal article" date="2010" name="Biosci. Biotechnol. Biochem.">
        <title>Sal k 4, a new allergen of Salsola kali, is profilin: a predictive value of conserved conformational regions in cross-reactivity with other plant-derived profilins.</title>
        <authorList>
            <person name="Assarehzadegan M.A."/>
            <person name="Amini A."/>
            <person name="Sankian M."/>
            <person name="Tehrani M."/>
            <person name="Jabbari F."/>
            <person name="Varasteh A."/>
        </authorList>
    </citation>
    <scope>NUCLEOTIDE SEQUENCE [MRNA]</scope>
    <scope>3D-STRUCTURE MODELING</scope>
    <scope>TISSUE SPECIFICITY</scope>
    <scope>ALLERGEN</scope>
    <source>
        <tissue evidence="7">Pollen</tissue>
    </source>
</reference>
<feature type="chain" id="PRO_0000447665" description="Profilin Sal k 4.0101">
    <location>
        <begin position="1"/>
        <end position="133"/>
    </location>
</feature>
<feature type="disulfide bond" evidence="2">
    <location>
        <begin position="95"/>
        <end position="117"/>
    </location>
</feature>
<comment type="function">
    <text evidence="4">Binds to actin and affects the structure of the cytoskeleton. At high concentrations, profilin prevents the polymerization of actin, whereas it enhances it at low concentrations.</text>
</comment>
<comment type="subunit">
    <text evidence="4">Occurs in many kinds of cells as a complex with monomeric actin in a 1:1 ratio.</text>
</comment>
<comment type="subcellular location">
    <subcellularLocation>
        <location evidence="1">Cytoplasm</location>
        <location evidence="1">Cytoskeleton</location>
    </subcellularLocation>
</comment>
<comment type="tissue specificity">
    <text evidence="6">Expressed in pollen.</text>
</comment>
<comment type="allergen">
    <text evidence="6">Causes an allergic reaction in human. Binds to IgE in 47% of the 30 patients allergic to S.kali pollen.</text>
</comment>
<comment type="similarity">
    <text evidence="3 5 8">Belongs to the profilin family.</text>
</comment>
<keyword id="KW-0009">Actin-binding</keyword>
<keyword id="KW-0020">Allergen</keyword>
<keyword id="KW-0963">Cytoplasm</keyword>
<keyword id="KW-0206">Cytoskeleton</keyword>
<keyword id="KW-1015">Disulfide bond</keyword>